<proteinExistence type="evidence at protein level"/>
<protein>
    <recommendedName>
        <fullName>Triadin</fullName>
    </recommendedName>
</protein>
<gene>
    <name type="primary">TRDN</name>
</gene>
<evidence type="ECO:0000250" key="1">
    <source>
        <dbReference type="UniProtKB" id="E9Q9K5"/>
    </source>
</evidence>
<evidence type="ECO:0000250" key="2">
    <source>
        <dbReference type="UniProtKB" id="Q28820"/>
    </source>
</evidence>
<evidence type="ECO:0000255" key="3"/>
<evidence type="ECO:0000256" key="4">
    <source>
        <dbReference type="SAM" id="MobiDB-lite"/>
    </source>
</evidence>
<evidence type="ECO:0000269" key="5">
    <source>
    </source>
</evidence>
<evidence type="ECO:0000269" key="6">
    <source>
    </source>
</evidence>
<evidence type="ECO:0000269" key="7">
    <source>
    </source>
</evidence>
<evidence type="ECO:0000269" key="8">
    <source>
    </source>
</evidence>
<evidence type="ECO:0000269" key="9">
    <source>
    </source>
</evidence>
<evidence type="ECO:0000303" key="10">
    <source>
    </source>
</evidence>
<name>TRDN_HUMAN</name>
<comment type="function">
    <text evidence="1 7">Contributes to the regulation of lumenal Ca2+ release via the sarcoplasmic reticulum calcium release channels RYR1 and RYR2, a key step in triggering skeletal and heart muscle contraction. Required for normal organization of the triad junction, where T-tubules and the sarcoplasmic reticulum terminal cisternae are in close contact (By similarity). Required for normal skeletal muscle strength. Plays a role in excitation-contraction coupling in the heart and in regulating the rate of heart beats.</text>
</comment>
<comment type="subunit">
    <text evidence="2 5 8">Homooligomer of variable subunit number; disulfide-linked (By similarity). Interacts with CASQ1 and RYR1 in skeletal muscle. Interacts with CASQ2.</text>
</comment>
<comment type="interaction">
    <interactant intactId="EBI-17257686">
        <id>Q13061-2</id>
    </interactant>
    <interactant intactId="EBI-11750916">
        <id>Q8WWG9</id>
        <label>KCNE4</label>
    </interactant>
    <organismsDiffer>false</organismsDiffer>
    <experiments>3</experiments>
</comment>
<comment type="interaction">
    <interactant intactId="EBI-17257686">
        <id>Q13061-2</id>
    </interactant>
    <interactant intactId="EBI-359252">
        <id>P23284</id>
        <label>PPIB</label>
    </interactant>
    <organismsDiffer>false</organismsDiffer>
    <experiments>3</experiments>
</comment>
<comment type="interaction">
    <interactant intactId="EBI-17257686">
        <id>Q13061-2</id>
    </interactant>
    <interactant intactId="EBI-10200782">
        <id>Q16849-3</id>
        <label>PTPRN</label>
    </interactant>
    <organismsDiffer>false</organismsDiffer>
    <experiments>3</experiments>
</comment>
<comment type="subcellular location">
    <subcellularLocation>
        <location evidence="7">Cell membrane</location>
    </subcellularLocation>
    <subcellularLocation>
        <location evidence="7 8">Sarcoplasmic reticulum membrane</location>
        <topology evidence="7 8">Single-pass type II membrane protein</topology>
    </subcellularLocation>
</comment>
<comment type="alternative products">
    <event type="alternative splicing"/>
    <isoform>
        <id>Q13061-1</id>
        <name>1</name>
        <sequence type="displayed"/>
    </isoform>
    <isoform>
        <id>Q13061-2</id>
        <name>2</name>
        <sequence type="described" ref="VSP_045563 VSP_045564 VSP_045565"/>
    </isoform>
    <isoform>
        <id>Q13061-3</id>
        <name>3</name>
        <sequence type="described" ref="VSP_045561 VSP_045562"/>
    </isoform>
</comment>
<comment type="PTM">
    <text evidence="2">Phosphorylated by CaMK2.</text>
</comment>
<comment type="PTM">
    <text evidence="1">N-glycosylated.</text>
</comment>
<comment type="disease" evidence="7">
    <disease id="DI-03912">
        <name>Cardiac arrhythmia syndrome, with or without skeletal muscle weakness</name>
        <acronym>CARDAR</acronym>
        <description>An autosomal recessive cardiac disorder characterized by stress-induced arrhythmias in infancy or early childhood. Patients present with recurrent syncope or cardiac arrest after physical activity or emotional stress. Sudden death may occur in early childhood. Some patients have muscle weakness.</description>
        <dbReference type="MIM" id="615441"/>
    </disease>
    <text>The disease is caused by variants affecting the gene represented in this entry.</text>
</comment>
<accession>Q13061</accession>
<accession>A5D6W5</accession>
<accession>F5H2W7</accession>
<accession>Q6NSB8</accession>
<sequence>MTEITAEGNASTTTTVIDSKNGSVPKSPGKVLKRTVTEDIVTTFSSPAAWLLVIALIITWSAVAIVMFDLVDYKNFSASSIAKIGSDPLKLVRDAMEETTDWIYGFFSLLSDIISSEDEEDDDGDEDTDKGEIDEPPLRKKEIHKDKTEKQEKPERKIQTKVTHKEKEKGKEKVREKEKPEKKATHKEKIEKKEKPETKTLAKEQKKAKTAEKSEEKTKKEVKGGKQEKVKQTAAKVKEVQKTPSKPKEKEDKEKAAVSKHEQKDQYAFCRYMIDIFVHGDLKPGQSPAIPPPLPTEQASRPTPASPALEEKEGEKKKAEKKVTSETKKKEKEDIKKKSEKETAIDVEKKEPGKASETKQGTVKIAAQAAAKKDEKKEDSKKTKKPAEVEQPKGKKQEKKEKHVEPAKSPKKEHSVPSDKQVKAKTERAKEEIGAVSIKKAVPGKKEEKTTKTVEQEIRKEKSGKTSSILKDKEPIKGKEEKVPASLKEKEPETKKDEKMSKAGKEVKPKPPQLQGKKEEKPEPQIKKEAKPAISEKVQIHKQDIVKPEKTVSHGKPEEKVLKQVKAVTIEKTAKPKPTKKAEHREREPPSIKTDKPKPTPKGTSEVTESGKKKTEISEKESKEKADMKHLREEKVSTRKESLQLHNVTKAEKPARVSKDVEDVPASKKAKEGTEDVSPTKQKSPISFFQCVYLDGYNGYGFQFPFTPADRPGESSGQANSPGQKQQGQ</sequence>
<keyword id="KW-0025">Alternative splicing</keyword>
<keyword id="KW-1003">Cell membrane</keyword>
<keyword id="KW-0225">Disease variant</keyword>
<keyword id="KW-1015">Disulfide bond</keyword>
<keyword id="KW-0325">Glycoprotein</keyword>
<keyword id="KW-0472">Membrane</keyword>
<keyword id="KW-0597">Phosphoprotein</keyword>
<keyword id="KW-1267">Proteomics identification</keyword>
<keyword id="KW-1185">Reference proteome</keyword>
<keyword id="KW-0703">Sarcoplasmic reticulum</keyword>
<keyword id="KW-0812">Transmembrane</keyword>
<keyword id="KW-1133">Transmembrane helix</keyword>
<reference key="1">
    <citation type="journal article" date="1995" name="Eur. J. Biochem.">
        <title>Molecular cloning of the cDNA encoding human skeletal muscle triadin and its localisation to chromosome 6q22-6q23.</title>
        <authorList>
            <person name="Taske N.L."/>
            <person name="Eyre H.J."/>
            <person name="O'Brien R.O."/>
            <person name="Sutherland G.R."/>
            <person name="Denborough M.A."/>
            <person name="Foster P.S."/>
        </authorList>
    </citation>
    <scope>NUCLEOTIDE SEQUENCE [MRNA] (ISOFORM 1)</scope>
    <scope>VARIANTS VAL-201 AND SER-438</scope>
    <source>
        <tissue>Skeletal muscle</tissue>
    </source>
</reference>
<reference key="2">
    <citation type="journal article" date="2003" name="Nature">
        <title>The DNA sequence and analysis of human chromosome 6.</title>
        <authorList>
            <person name="Mungall A.J."/>
            <person name="Palmer S.A."/>
            <person name="Sims S.K."/>
            <person name="Edwards C.A."/>
            <person name="Ashurst J.L."/>
            <person name="Wilming L."/>
            <person name="Jones M.C."/>
            <person name="Horton R."/>
            <person name="Hunt S.E."/>
            <person name="Scott C.E."/>
            <person name="Gilbert J.G.R."/>
            <person name="Clamp M.E."/>
            <person name="Bethel G."/>
            <person name="Milne S."/>
            <person name="Ainscough R."/>
            <person name="Almeida J.P."/>
            <person name="Ambrose K.D."/>
            <person name="Andrews T.D."/>
            <person name="Ashwell R.I.S."/>
            <person name="Babbage A.K."/>
            <person name="Bagguley C.L."/>
            <person name="Bailey J."/>
            <person name="Banerjee R."/>
            <person name="Barker D.J."/>
            <person name="Barlow K.F."/>
            <person name="Bates K."/>
            <person name="Beare D.M."/>
            <person name="Beasley H."/>
            <person name="Beasley O."/>
            <person name="Bird C.P."/>
            <person name="Blakey S.E."/>
            <person name="Bray-Allen S."/>
            <person name="Brook J."/>
            <person name="Brown A.J."/>
            <person name="Brown J.Y."/>
            <person name="Burford D.C."/>
            <person name="Burrill W."/>
            <person name="Burton J."/>
            <person name="Carder C."/>
            <person name="Carter N.P."/>
            <person name="Chapman J.C."/>
            <person name="Clark S.Y."/>
            <person name="Clark G."/>
            <person name="Clee C.M."/>
            <person name="Clegg S."/>
            <person name="Cobley V."/>
            <person name="Collier R.E."/>
            <person name="Collins J.E."/>
            <person name="Colman L.K."/>
            <person name="Corby N.R."/>
            <person name="Coville G.J."/>
            <person name="Culley K.M."/>
            <person name="Dhami P."/>
            <person name="Davies J."/>
            <person name="Dunn M."/>
            <person name="Earthrowl M.E."/>
            <person name="Ellington A.E."/>
            <person name="Evans K.A."/>
            <person name="Faulkner L."/>
            <person name="Francis M.D."/>
            <person name="Frankish A."/>
            <person name="Frankland J."/>
            <person name="French L."/>
            <person name="Garner P."/>
            <person name="Garnett J."/>
            <person name="Ghori M.J."/>
            <person name="Gilby L.M."/>
            <person name="Gillson C.J."/>
            <person name="Glithero R.J."/>
            <person name="Grafham D.V."/>
            <person name="Grant M."/>
            <person name="Gribble S."/>
            <person name="Griffiths C."/>
            <person name="Griffiths M.N.D."/>
            <person name="Hall R."/>
            <person name="Halls K.S."/>
            <person name="Hammond S."/>
            <person name="Harley J.L."/>
            <person name="Hart E.A."/>
            <person name="Heath P.D."/>
            <person name="Heathcott R."/>
            <person name="Holmes S.J."/>
            <person name="Howden P.J."/>
            <person name="Howe K.L."/>
            <person name="Howell G.R."/>
            <person name="Huckle E."/>
            <person name="Humphray S.J."/>
            <person name="Humphries M.D."/>
            <person name="Hunt A.R."/>
            <person name="Johnson C.M."/>
            <person name="Joy A.A."/>
            <person name="Kay M."/>
            <person name="Keenan S.J."/>
            <person name="Kimberley A.M."/>
            <person name="King A."/>
            <person name="Laird G.K."/>
            <person name="Langford C."/>
            <person name="Lawlor S."/>
            <person name="Leongamornlert D.A."/>
            <person name="Leversha M."/>
            <person name="Lloyd C.R."/>
            <person name="Lloyd D.M."/>
            <person name="Loveland J.E."/>
            <person name="Lovell J."/>
            <person name="Martin S."/>
            <person name="Mashreghi-Mohammadi M."/>
            <person name="Maslen G.L."/>
            <person name="Matthews L."/>
            <person name="McCann O.T."/>
            <person name="McLaren S.J."/>
            <person name="McLay K."/>
            <person name="McMurray A."/>
            <person name="Moore M.J.F."/>
            <person name="Mullikin J.C."/>
            <person name="Niblett D."/>
            <person name="Nickerson T."/>
            <person name="Novik K.L."/>
            <person name="Oliver K."/>
            <person name="Overton-Larty E.K."/>
            <person name="Parker A."/>
            <person name="Patel R."/>
            <person name="Pearce A.V."/>
            <person name="Peck A.I."/>
            <person name="Phillimore B.J.C.T."/>
            <person name="Phillips S."/>
            <person name="Plumb R.W."/>
            <person name="Porter K.M."/>
            <person name="Ramsey Y."/>
            <person name="Ranby S.A."/>
            <person name="Rice C.M."/>
            <person name="Ross M.T."/>
            <person name="Searle S.M."/>
            <person name="Sehra H.K."/>
            <person name="Sheridan E."/>
            <person name="Skuce C.D."/>
            <person name="Smith S."/>
            <person name="Smith M."/>
            <person name="Spraggon L."/>
            <person name="Squares S.L."/>
            <person name="Steward C.A."/>
            <person name="Sycamore N."/>
            <person name="Tamlyn-Hall G."/>
            <person name="Tester J."/>
            <person name="Theaker A.J."/>
            <person name="Thomas D.W."/>
            <person name="Thorpe A."/>
            <person name="Tracey A."/>
            <person name="Tromans A."/>
            <person name="Tubby B."/>
            <person name="Wall M."/>
            <person name="Wallis J.M."/>
            <person name="West A.P."/>
            <person name="White S.S."/>
            <person name="Whitehead S.L."/>
            <person name="Whittaker H."/>
            <person name="Wild A."/>
            <person name="Willey D.J."/>
            <person name="Wilmer T.E."/>
            <person name="Wood J.M."/>
            <person name="Wray P.W."/>
            <person name="Wyatt J.C."/>
            <person name="Young L."/>
            <person name="Younger R.M."/>
            <person name="Bentley D.R."/>
            <person name="Coulson A."/>
            <person name="Durbin R.M."/>
            <person name="Hubbard T."/>
            <person name="Sulston J.E."/>
            <person name="Dunham I."/>
            <person name="Rogers J."/>
            <person name="Beck S."/>
        </authorList>
    </citation>
    <scope>NUCLEOTIDE SEQUENCE [LARGE SCALE GENOMIC DNA]</scope>
</reference>
<reference key="3">
    <citation type="journal article" date="2004" name="Genome Res.">
        <title>The status, quality, and expansion of the NIH full-length cDNA project: the Mammalian Gene Collection (MGC).</title>
        <authorList>
            <consortium name="The MGC Project Team"/>
        </authorList>
    </citation>
    <scope>NUCLEOTIDE SEQUENCE [LARGE SCALE MRNA] (ISOFORMS 2 AND 3)</scope>
    <scope>VARIANTS SER-128 AND VAL-201</scope>
    <source>
        <tissue>Skeletal muscle</tissue>
    </source>
</reference>
<reference key="4">
    <citation type="journal article" date="2004" name="Cardiovasc. Res.">
        <title>Calsequestrin mutant D307H exhibits depressed binding to its protein targets and a depressed response to calcium.</title>
        <authorList>
            <person name="Houle T.D."/>
            <person name="Ram M.L."/>
            <person name="Cala S.E."/>
        </authorList>
    </citation>
    <scope>INTERACTION WITH CASQ2</scope>
</reference>
<reference key="5">
    <citation type="journal article" date="2012" name="Hum. Mol. Genet.">
        <title>Absence of triadin, a protein of the calcium release complex, is responsible for cardiac arrhythmia with sudden death in human.</title>
        <authorList>
            <person name="Roux-Buisson N."/>
            <person name="Cacheux M."/>
            <person name="Fourest-Lieuvin A."/>
            <person name="Fauconnier J."/>
            <person name="Brocard J."/>
            <person name="Denjoy I."/>
            <person name="Durand P."/>
            <person name="Guicheney P."/>
            <person name="Kyndt F."/>
            <person name="Leenhardt A."/>
            <person name="Le Marec H."/>
            <person name="Lucet V."/>
            <person name="Mabo P."/>
            <person name="Probst V."/>
            <person name="Monnier N."/>
            <person name="Ray P.F."/>
            <person name="Santoni E."/>
            <person name="Tremeaux P."/>
            <person name="Lacampagne A."/>
            <person name="Faure J."/>
            <person name="Lunardi J."/>
            <person name="Marty I."/>
        </authorList>
    </citation>
    <scope>SUBCELLULAR LOCATION</scope>
    <scope>VARIANT CARDAR ARG-59</scope>
    <scope>CHARACTERIZATION OF VARIANT CARDAR ARG-59</scope>
    <scope>FUNCTION</scope>
</reference>
<reference key="6">
    <citation type="journal article" date="2014" name="Biochem. J.">
        <title>Distinct regions of triadin are required for targeting and retention at the junctional domain of the sarcoplasmic reticulum.</title>
        <authorList>
            <person name="Rossi D."/>
            <person name="Bencini C."/>
            <person name="Maritati M."/>
            <person name="Benini F."/>
            <person name="Lorenzini S."/>
            <person name="Pierantozzi E."/>
            <person name="Scarcella A.M."/>
            <person name="Paolini C."/>
            <person name="Protasi F."/>
            <person name="Sorrentino V."/>
        </authorList>
    </citation>
    <scope>SUBCELLULAR LOCATION</scope>
    <scope>INTERACTION WITH RYR1 AND CASQ1</scope>
</reference>
<feature type="chain" id="PRO_0000065626" description="Triadin">
    <location>
        <begin position="1"/>
        <end position="729"/>
    </location>
</feature>
<feature type="topological domain" description="Cytoplasmic">
    <location>
        <begin position="1"/>
        <end position="47"/>
    </location>
</feature>
<feature type="transmembrane region" description="Helical" evidence="3">
    <location>
        <begin position="48"/>
        <end position="68"/>
    </location>
</feature>
<feature type="topological domain" description="Lumenal">
    <location>
        <begin position="69"/>
        <end position="729"/>
    </location>
</feature>
<feature type="region of interest" description="Disordered" evidence="4">
    <location>
        <begin position="1"/>
        <end position="28"/>
    </location>
</feature>
<feature type="region of interest" description="Disordered" evidence="4">
    <location>
        <begin position="117"/>
        <end position="265"/>
    </location>
</feature>
<feature type="region of interest" description="Disordered" evidence="4">
    <location>
        <begin position="281"/>
        <end position="682"/>
    </location>
</feature>
<feature type="region of interest" description="Disordered" evidence="4">
    <location>
        <begin position="705"/>
        <end position="729"/>
    </location>
</feature>
<feature type="compositionally biased region" description="Polar residues" evidence="4">
    <location>
        <begin position="8"/>
        <end position="24"/>
    </location>
</feature>
<feature type="compositionally biased region" description="Acidic residues" evidence="4">
    <location>
        <begin position="117"/>
        <end position="129"/>
    </location>
</feature>
<feature type="compositionally biased region" description="Basic and acidic residues" evidence="4">
    <location>
        <begin position="130"/>
        <end position="265"/>
    </location>
</feature>
<feature type="compositionally biased region" description="Basic and acidic residues" evidence="4">
    <location>
        <begin position="309"/>
        <end position="357"/>
    </location>
</feature>
<feature type="compositionally biased region" description="Basic and acidic residues" evidence="4">
    <location>
        <begin position="371"/>
        <end position="433"/>
    </location>
</feature>
<feature type="compositionally biased region" description="Basic and acidic residues" evidence="4">
    <location>
        <begin position="444"/>
        <end position="509"/>
    </location>
</feature>
<feature type="compositionally biased region" description="Basic and acidic residues" evidence="4">
    <location>
        <begin position="516"/>
        <end position="531"/>
    </location>
</feature>
<feature type="compositionally biased region" description="Basic and acidic residues" evidence="4">
    <location>
        <begin position="538"/>
        <end position="562"/>
    </location>
</feature>
<feature type="compositionally biased region" description="Basic and acidic residues" evidence="4">
    <location>
        <begin position="580"/>
        <end position="598"/>
    </location>
</feature>
<feature type="compositionally biased region" description="Basic and acidic residues" evidence="4">
    <location>
        <begin position="609"/>
        <end position="674"/>
    </location>
</feature>
<feature type="compositionally biased region" description="Polar residues" evidence="4">
    <location>
        <begin position="715"/>
        <end position="729"/>
    </location>
</feature>
<feature type="glycosylation site" description="N-linked (GlcNAc...) asparagine" evidence="3">
    <location>
        <position position="75"/>
    </location>
</feature>
<feature type="glycosylation site" description="N-linked (GlcNAc...) asparagine" evidence="3">
    <location>
        <position position="647"/>
    </location>
</feature>
<feature type="disulfide bond" description="Interchain" evidence="2">
    <location>
        <position position="270"/>
    </location>
</feature>
<feature type="disulfide bond" description="Interchain" evidence="2">
    <location>
        <position position="691"/>
    </location>
</feature>
<feature type="splice variant" id="VSP_045561" description="In isoform 3." evidence="10">
    <original>VTHKEK</original>
    <variation>EVGHSS</variation>
    <location>
        <begin position="162"/>
        <end position="167"/>
    </location>
</feature>
<feature type="splice variant" id="VSP_045562" description="In isoform 3." evidence="10">
    <location>
        <begin position="168"/>
        <end position="729"/>
    </location>
</feature>
<feature type="splice variant" id="VSP_045563" description="In isoform 2." evidence="10">
    <location>
        <begin position="265"/>
        <end position="284"/>
    </location>
</feature>
<feature type="splice variant" id="VSP_045564" description="In isoform 2." evidence="10">
    <original>EKEGEKK</original>
    <variation>GKYFFFS</variation>
    <location>
        <begin position="311"/>
        <end position="317"/>
    </location>
</feature>
<feature type="splice variant" id="VSP_045565" description="In isoform 2." evidence="10">
    <location>
        <begin position="318"/>
        <end position="729"/>
    </location>
</feature>
<feature type="sequence variant" id="VAR_067350" description="In CARDAR; results in intracellular retention and degradation of the mutant protein; dbSNP:rs397515459." evidence="7">
    <original>T</original>
    <variation>R</variation>
    <location>
        <position position="59"/>
    </location>
</feature>
<feature type="sequence variant" id="VAR_057008" description="In dbSNP:rs9490809." evidence="6">
    <original>T</original>
    <variation>S</variation>
    <location>
        <position position="128"/>
    </location>
</feature>
<feature type="sequence variant" id="VAR_065263" description="In dbSNP:rs6902416." evidence="6 9">
    <original>L</original>
    <variation>V</variation>
    <location>
        <position position="201"/>
    </location>
</feature>
<feature type="sequence variant" id="VAR_057009" description="In dbSNP:rs35766971.">
    <original>S</original>
    <variation>N</variation>
    <location>
        <position position="339"/>
    </location>
</feature>
<feature type="sequence variant" id="VAR_065264" description="In dbSNP:rs6901953.">
    <original>K</original>
    <variation>N</variation>
    <location>
        <position position="396"/>
    </location>
</feature>
<feature type="sequence variant" id="VAR_057010" description="In dbSNP:rs28494009.">
    <original>V</original>
    <variation>G</variation>
    <location>
        <position position="404"/>
    </location>
</feature>
<feature type="sequence variant" id="VAR_057011" description="In dbSNP:rs17737379.">
    <original>D</original>
    <variation>E</variation>
    <location>
        <position position="419"/>
    </location>
</feature>
<feature type="sequence variant" id="VAR_065265" description="In dbSNP:rs2873479." evidence="9">
    <original>I</original>
    <variation>S</variation>
    <location>
        <position position="438"/>
    </location>
</feature>
<feature type="sequence variant" id="VAR_057012" description="In dbSNP:rs6569336.">
    <original>L</original>
    <variation>M</variation>
    <location>
        <position position="470"/>
    </location>
</feature>
<feature type="sequence variant" id="VAR_057013" description="In dbSNP:rs7771303.">
    <original>I</original>
    <variation>M</variation>
    <location>
        <position position="540"/>
    </location>
</feature>
<organism>
    <name type="scientific">Homo sapiens</name>
    <name type="common">Human</name>
    <dbReference type="NCBI Taxonomy" id="9606"/>
    <lineage>
        <taxon>Eukaryota</taxon>
        <taxon>Metazoa</taxon>
        <taxon>Chordata</taxon>
        <taxon>Craniata</taxon>
        <taxon>Vertebrata</taxon>
        <taxon>Euteleostomi</taxon>
        <taxon>Mammalia</taxon>
        <taxon>Eutheria</taxon>
        <taxon>Euarchontoglires</taxon>
        <taxon>Primates</taxon>
        <taxon>Haplorrhini</taxon>
        <taxon>Catarrhini</taxon>
        <taxon>Hominidae</taxon>
        <taxon>Homo</taxon>
    </lineage>
</organism>
<dbReference type="EMBL" id="U18985">
    <property type="protein sequence ID" value="AAA75315.1"/>
    <property type="molecule type" value="mRNA"/>
</dbReference>
<dbReference type="EMBL" id="AL133257">
    <property type="status" value="NOT_ANNOTATED_CDS"/>
    <property type="molecule type" value="Genomic_DNA"/>
</dbReference>
<dbReference type="EMBL" id="AL357352">
    <property type="status" value="NOT_ANNOTATED_CDS"/>
    <property type="molecule type" value="Genomic_DNA"/>
</dbReference>
<dbReference type="EMBL" id="AL445259">
    <property type="status" value="NOT_ANNOTATED_CDS"/>
    <property type="molecule type" value="Genomic_DNA"/>
</dbReference>
<dbReference type="EMBL" id="AL603902">
    <property type="status" value="NOT_ANNOTATED_CDS"/>
    <property type="molecule type" value="Genomic_DNA"/>
</dbReference>
<dbReference type="EMBL" id="AL603911">
    <property type="status" value="NOT_ANNOTATED_CDS"/>
    <property type="molecule type" value="Genomic_DNA"/>
</dbReference>
<dbReference type="EMBL" id="BC070290">
    <property type="protein sequence ID" value="AAH70290.1"/>
    <property type="molecule type" value="mRNA"/>
</dbReference>
<dbReference type="EMBL" id="BC139910">
    <property type="protein sequence ID" value="AAI39911.1"/>
    <property type="molecule type" value="mRNA"/>
</dbReference>
<dbReference type="CCDS" id="CCDS55053.1">
    <molecule id="Q13061-1"/>
</dbReference>
<dbReference type="CCDS" id="CCDS59034.1">
    <molecule id="Q13061-2"/>
</dbReference>
<dbReference type="CCDS" id="CCDS59035.1">
    <molecule id="Q13061-3"/>
</dbReference>
<dbReference type="PIR" id="S68191">
    <property type="entry name" value="S68191"/>
</dbReference>
<dbReference type="RefSeq" id="NP_001242949.1">
    <molecule id="Q13061-2"/>
    <property type="nucleotide sequence ID" value="NM_001256020.2"/>
</dbReference>
<dbReference type="RefSeq" id="NP_001242951.1">
    <molecule id="Q13061-3"/>
    <property type="nucleotide sequence ID" value="NM_001256022.2"/>
</dbReference>
<dbReference type="RefSeq" id="NP_006064.2">
    <molecule id="Q13061-1"/>
    <property type="nucleotide sequence ID" value="NM_006073.4"/>
</dbReference>
<dbReference type="SMR" id="Q13061"/>
<dbReference type="BioGRID" id="115627">
    <property type="interactions" value="76"/>
</dbReference>
<dbReference type="FunCoup" id="Q13061">
    <property type="interactions" value="352"/>
</dbReference>
<dbReference type="IntAct" id="Q13061">
    <property type="interactions" value="51"/>
</dbReference>
<dbReference type="STRING" id="9606.ENSP00000333984"/>
<dbReference type="TCDB" id="8.A.28.1.3">
    <property type="family name" value="the ankyrin (ankyrin) family"/>
</dbReference>
<dbReference type="GlyCosmos" id="Q13061">
    <property type="glycosylation" value="3 sites, 1 glycan"/>
</dbReference>
<dbReference type="GlyGen" id="Q13061">
    <property type="glycosylation" value="4 sites, 2 O-linked glycans (2 sites)"/>
</dbReference>
<dbReference type="iPTMnet" id="Q13061"/>
<dbReference type="PhosphoSitePlus" id="Q13061"/>
<dbReference type="BioMuta" id="TRDN"/>
<dbReference type="MassIVE" id="Q13061"/>
<dbReference type="PaxDb" id="9606-ENSP00000439281"/>
<dbReference type="PeptideAtlas" id="Q13061"/>
<dbReference type="ProteomicsDB" id="26096"/>
<dbReference type="ProteomicsDB" id="59126">
    <molecule id="Q13061-1"/>
</dbReference>
<dbReference type="Antibodypedia" id="51878">
    <property type="antibodies" value="49 antibodies from 12 providers"/>
</dbReference>
<dbReference type="DNASU" id="10345"/>
<dbReference type="Ensembl" id="ENST00000334268.9">
    <molecule id="Q13061-1"/>
    <property type="protein sequence ID" value="ENSP00000333984.5"/>
    <property type="gene ID" value="ENSG00000186439.16"/>
</dbReference>
<dbReference type="Ensembl" id="ENST00000542443.5">
    <molecule id="Q13061-3"/>
    <property type="protein sequence ID" value="ENSP00000437684.1"/>
    <property type="gene ID" value="ENSG00000186439.16"/>
</dbReference>
<dbReference type="Ensembl" id="ENST00000628709.2">
    <molecule id="Q13061-2"/>
    <property type="protein sequence ID" value="ENSP00000486095.1"/>
    <property type="gene ID" value="ENSG00000186439.16"/>
</dbReference>
<dbReference type="GeneID" id="10345"/>
<dbReference type="KEGG" id="hsa:10345"/>
<dbReference type="MANE-Select" id="ENST00000334268.9">
    <property type="protein sequence ID" value="ENSP00000333984.5"/>
    <property type="RefSeq nucleotide sequence ID" value="NM_006073.4"/>
    <property type="RefSeq protein sequence ID" value="NP_006064.2"/>
</dbReference>
<dbReference type="UCSC" id="uc010keo.3">
    <molecule id="Q13061-1"/>
    <property type="organism name" value="human"/>
</dbReference>
<dbReference type="AGR" id="HGNC:12261"/>
<dbReference type="CTD" id="10345"/>
<dbReference type="DisGeNET" id="10345"/>
<dbReference type="GeneCards" id="TRDN"/>
<dbReference type="GeneReviews" id="TRDN"/>
<dbReference type="HGNC" id="HGNC:12261">
    <property type="gene designation" value="TRDN"/>
</dbReference>
<dbReference type="HPA" id="ENSG00000186439">
    <property type="expression patterns" value="Tissue enhanced (heart muscle, skeletal muscle, tongue)"/>
</dbReference>
<dbReference type="MalaCards" id="TRDN"/>
<dbReference type="MIM" id="603283">
    <property type="type" value="gene"/>
</dbReference>
<dbReference type="MIM" id="615441">
    <property type="type" value="phenotype"/>
</dbReference>
<dbReference type="neXtProt" id="NX_Q13061"/>
<dbReference type="OpenTargets" id="ENSG00000186439"/>
<dbReference type="Orphanet" id="3286">
    <property type="disease" value="Catecholaminergic polymorphic ventricular tachycardia"/>
</dbReference>
<dbReference type="Orphanet" id="101016">
    <property type="disease" value="Romano-Ward syndrome"/>
</dbReference>
<dbReference type="PharmGKB" id="PA36941"/>
<dbReference type="VEuPathDB" id="HostDB:ENSG00000186439"/>
<dbReference type="eggNOG" id="ENOG502S0X4">
    <property type="taxonomic scope" value="Eukaryota"/>
</dbReference>
<dbReference type="GeneTree" id="ENSGT00510000049207"/>
<dbReference type="HOGENOM" id="CLU_104022_2_0_1"/>
<dbReference type="InParanoid" id="Q13061"/>
<dbReference type="OMA" id="TQIHKQD"/>
<dbReference type="OrthoDB" id="9908116at2759"/>
<dbReference type="PAN-GO" id="Q13061">
    <property type="GO annotations" value="7 GO annotations based on evolutionary models"/>
</dbReference>
<dbReference type="TreeFam" id="TF350396"/>
<dbReference type="PathwayCommons" id="Q13061"/>
<dbReference type="Reactome" id="R-HSA-2672351">
    <property type="pathway name" value="Stimuli-sensing channels"/>
</dbReference>
<dbReference type="Reactome" id="R-HSA-5578775">
    <property type="pathway name" value="Ion homeostasis"/>
</dbReference>
<dbReference type="SignaLink" id="Q13061"/>
<dbReference type="BioGRID-ORCS" id="10345">
    <property type="hits" value="11 hits in 1117 CRISPR screens"/>
</dbReference>
<dbReference type="ChiTaRS" id="TRDN">
    <property type="organism name" value="human"/>
</dbReference>
<dbReference type="GeneWiki" id="Triadin"/>
<dbReference type="GenomeRNAi" id="10345"/>
<dbReference type="Pharos" id="Q13061">
    <property type="development level" value="Tbio"/>
</dbReference>
<dbReference type="PRO" id="PR:Q13061"/>
<dbReference type="Proteomes" id="UP000005640">
    <property type="component" value="Chromosome 6"/>
</dbReference>
<dbReference type="RNAct" id="Q13061">
    <property type="molecule type" value="protein"/>
</dbReference>
<dbReference type="Bgee" id="ENSG00000186439">
    <property type="expression patterns" value="Expressed in skeletal muscle tissue of rectus abdominis and 123 other cell types or tissues"/>
</dbReference>
<dbReference type="ExpressionAtlas" id="Q13061">
    <property type="expression patterns" value="baseline and differential"/>
</dbReference>
<dbReference type="GO" id="GO:0005829">
    <property type="term" value="C:cytosol"/>
    <property type="evidence" value="ECO:0000314"/>
    <property type="project" value="HPA"/>
</dbReference>
<dbReference type="GO" id="GO:0005783">
    <property type="term" value="C:endoplasmic reticulum"/>
    <property type="evidence" value="ECO:0000250"/>
    <property type="project" value="BHF-UCL"/>
</dbReference>
<dbReference type="GO" id="GO:0030314">
    <property type="term" value="C:junctional membrane complex"/>
    <property type="evidence" value="ECO:0000250"/>
    <property type="project" value="BHF-UCL"/>
</dbReference>
<dbReference type="GO" id="GO:0014701">
    <property type="term" value="C:junctional sarcoplasmic reticulum membrane"/>
    <property type="evidence" value="ECO:0000250"/>
    <property type="project" value="BHF-UCL"/>
</dbReference>
<dbReference type="GO" id="GO:0016020">
    <property type="term" value="C:membrane"/>
    <property type="evidence" value="ECO:0000304"/>
    <property type="project" value="ProtInc"/>
</dbReference>
<dbReference type="GO" id="GO:0005654">
    <property type="term" value="C:nucleoplasm"/>
    <property type="evidence" value="ECO:0000314"/>
    <property type="project" value="HPA"/>
</dbReference>
<dbReference type="GO" id="GO:0005886">
    <property type="term" value="C:plasma membrane"/>
    <property type="evidence" value="ECO:0000314"/>
    <property type="project" value="HPA"/>
</dbReference>
<dbReference type="GO" id="GO:0016529">
    <property type="term" value="C:sarcoplasmic reticulum"/>
    <property type="evidence" value="ECO:0000250"/>
    <property type="project" value="BHF-UCL"/>
</dbReference>
<dbReference type="GO" id="GO:0033018">
    <property type="term" value="C:sarcoplasmic reticulum lumen"/>
    <property type="evidence" value="ECO:0000304"/>
    <property type="project" value="BHF-UCL"/>
</dbReference>
<dbReference type="GO" id="GO:0033017">
    <property type="term" value="C:sarcoplasmic reticulum membrane"/>
    <property type="evidence" value="ECO:0000304"/>
    <property type="project" value="BHF-UCL"/>
</dbReference>
<dbReference type="GO" id="GO:0030674">
    <property type="term" value="F:protein-macromolecule adaptor activity"/>
    <property type="evidence" value="ECO:0000250"/>
    <property type="project" value="BHF-UCL"/>
</dbReference>
<dbReference type="GO" id="GO:0005102">
    <property type="term" value="F:signaling receptor binding"/>
    <property type="evidence" value="ECO:0007669"/>
    <property type="project" value="InterPro"/>
</dbReference>
<dbReference type="GO" id="GO:0044325">
    <property type="term" value="F:transmembrane transporter binding"/>
    <property type="evidence" value="ECO:0000250"/>
    <property type="project" value="BHF-UCL"/>
</dbReference>
<dbReference type="GO" id="GO:0031122">
    <property type="term" value="P:cytoplasmic microtubule organization"/>
    <property type="evidence" value="ECO:0000250"/>
    <property type="project" value="BHF-UCL"/>
</dbReference>
<dbReference type="GO" id="GO:0090158">
    <property type="term" value="P:endoplasmic reticulum membrane organization"/>
    <property type="evidence" value="ECO:0000250"/>
    <property type="project" value="BHF-UCL"/>
</dbReference>
<dbReference type="GO" id="GO:0051649">
    <property type="term" value="P:establishment of localization in cell"/>
    <property type="evidence" value="ECO:0007669"/>
    <property type="project" value="Ensembl"/>
</dbReference>
<dbReference type="GO" id="GO:0060047">
    <property type="term" value="P:heart contraction"/>
    <property type="evidence" value="ECO:0000315"/>
    <property type="project" value="BHF-UCL"/>
</dbReference>
<dbReference type="GO" id="GO:0006874">
    <property type="term" value="P:intracellular calcium ion homeostasis"/>
    <property type="evidence" value="ECO:0000250"/>
    <property type="project" value="BHF-UCL"/>
</dbReference>
<dbReference type="GO" id="GO:0006936">
    <property type="term" value="P:muscle contraction"/>
    <property type="evidence" value="ECO:0000304"/>
    <property type="project" value="ProtInc"/>
</dbReference>
<dbReference type="GO" id="GO:1901846">
    <property type="term" value="P:positive regulation of cell communication by electrical coupling involved in cardiac conduction"/>
    <property type="evidence" value="ECO:0000250"/>
    <property type="project" value="BHF-UCL"/>
</dbReference>
<dbReference type="GO" id="GO:0086036">
    <property type="term" value="P:regulation of cardiac muscle cell membrane potential"/>
    <property type="evidence" value="ECO:0000250"/>
    <property type="project" value="BHF-UCL"/>
</dbReference>
<dbReference type="GO" id="GO:0010881">
    <property type="term" value="P:regulation of cardiac muscle contraction by regulation of the release of sequestered calcium ion"/>
    <property type="evidence" value="ECO:0000304"/>
    <property type="project" value="BHF-UCL"/>
</dbReference>
<dbReference type="GO" id="GO:0010649">
    <property type="term" value="P:regulation of cell communication by electrical coupling"/>
    <property type="evidence" value="ECO:0000304"/>
    <property type="project" value="BHF-UCL"/>
</dbReference>
<dbReference type="GO" id="GO:0010880">
    <property type="term" value="P:regulation of release of sequestered calcium ion into cytosol by sarcoplasmic reticulum"/>
    <property type="evidence" value="ECO:0000250"/>
    <property type="project" value="BHF-UCL"/>
</dbReference>
<dbReference type="GO" id="GO:0014808">
    <property type="term" value="P:release of sequestered calcium ion into cytosol by sarcoplasmic reticulum"/>
    <property type="evidence" value="ECO:0000250"/>
    <property type="project" value="BHF-UCL"/>
</dbReference>
<dbReference type="GO" id="GO:0009617">
    <property type="term" value="P:response to bacterium"/>
    <property type="evidence" value="ECO:0007669"/>
    <property type="project" value="Ensembl"/>
</dbReference>
<dbReference type="InterPro" id="IPR007943">
    <property type="entry name" value="Asp-B-hydro/Triadin_dom"/>
</dbReference>
<dbReference type="InterPro" id="IPR010798">
    <property type="entry name" value="Triadin"/>
</dbReference>
<dbReference type="PANTHER" id="PTHR14106">
    <property type="entry name" value="TRIADIN"/>
    <property type="match status" value="1"/>
</dbReference>
<dbReference type="PANTHER" id="PTHR14106:SF0">
    <property type="entry name" value="TRIADIN"/>
    <property type="match status" value="1"/>
</dbReference>
<dbReference type="Pfam" id="PF05279">
    <property type="entry name" value="Asp-B-Hydro_N"/>
    <property type="match status" value="1"/>
</dbReference>